<dbReference type="PIR" id="B31440">
    <property type="entry name" value="B31440"/>
</dbReference>
<dbReference type="SMR" id="P05596"/>
<dbReference type="iPTMnet" id="P05596"/>
<dbReference type="GO" id="GO:0005576">
    <property type="term" value="C:extracellular region"/>
    <property type="evidence" value="ECO:0007669"/>
    <property type="project" value="UniProtKB-SubCell"/>
</dbReference>
<dbReference type="GO" id="GO:0004867">
    <property type="term" value="F:serine-type endopeptidase inhibitor activity"/>
    <property type="evidence" value="ECO:0007669"/>
    <property type="project" value="UniProtKB-KW"/>
</dbReference>
<dbReference type="CDD" id="cd00104">
    <property type="entry name" value="KAZAL_FS"/>
    <property type="match status" value="1"/>
</dbReference>
<dbReference type="FunFam" id="3.30.60.30:FF:000037">
    <property type="entry name" value="Ovomucoid"/>
    <property type="match status" value="1"/>
</dbReference>
<dbReference type="Gene3D" id="3.30.60.30">
    <property type="match status" value="1"/>
</dbReference>
<dbReference type="InterPro" id="IPR051597">
    <property type="entry name" value="Bifunctional_prot_inhibitor"/>
</dbReference>
<dbReference type="InterPro" id="IPR002350">
    <property type="entry name" value="Kazal_dom"/>
</dbReference>
<dbReference type="InterPro" id="IPR036058">
    <property type="entry name" value="Kazal_dom_sf"/>
</dbReference>
<dbReference type="InterPro" id="IPR001239">
    <property type="entry name" value="Prot_inh_Kazal-m"/>
</dbReference>
<dbReference type="PANTHER" id="PTHR47729:SF1">
    <property type="entry name" value="OVOMUCOID-LIKE-RELATED"/>
    <property type="match status" value="1"/>
</dbReference>
<dbReference type="PANTHER" id="PTHR47729">
    <property type="entry name" value="SERINE PEPTIDASE INHIBITOR, KAZAL TYPE 2, TANDEM DUPLICATE 1-RELATED"/>
    <property type="match status" value="1"/>
</dbReference>
<dbReference type="Pfam" id="PF00050">
    <property type="entry name" value="Kazal_1"/>
    <property type="match status" value="1"/>
</dbReference>
<dbReference type="PRINTS" id="PR00290">
    <property type="entry name" value="KAZALINHBTR"/>
</dbReference>
<dbReference type="SMART" id="SM00280">
    <property type="entry name" value="KAZAL"/>
    <property type="match status" value="1"/>
</dbReference>
<dbReference type="SUPFAM" id="SSF100895">
    <property type="entry name" value="Kazal-type serine protease inhibitors"/>
    <property type="match status" value="1"/>
</dbReference>
<dbReference type="PROSITE" id="PS00282">
    <property type="entry name" value="KAZAL_1"/>
    <property type="match status" value="1"/>
</dbReference>
<dbReference type="PROSITE" id="PS51465">
    <property type="entry name" value="KAZAL_2"/>
    <property type="match status" value="1"/>
</dbReference>
<proteinExistence type="evidence at protein level"/>
<comment type="subcellular location">
    <subcellularLocation>
        <location>Secreted</location>
    </subcellularLocation>
</comment>
<comment type="domain">
    <text>Avian ovomucoid consists of three homologous, tandem Kazal family inhibitory domains.</text>
</comment>
<keyword id="KW-0903">Direct protein sequencing</keyword>
<keyword id="KW-1015">Disulfide bond</keyword>
<keyword id="KW-0325">Glycoprotein</keyword>
<keyword id="KW-0646">Protease inhibitor</keyword>
<keyword id="KW-0677">Repeat</keyword>
<keyword id="KW-0964">Secreted</keyword>
<keyword id="KW-0722">Serine protease inhibitor</keyword>
<evidence type="ECO:0000255" key="1">
    <source>
        <dbReference type="PROSITE-ProRule" id="PRU00798"/>
    </source>
</evidence>
<evidence type="ECO:0000269" key="2">
    <source>
    </source>
</evidence>
<feature type="chain" id="PRO_0000073110" description="Ovomucoid">
    <location>
        <begin position="1" status="less than"/>
        <end position="56" status="greater than"/>
    </location>
</feature>
<feature type="domain" description="Kazal-like" evidence="1">
    <location>
        <begin position="6"/>
        <end position="56"/>
    </location>
</feature>
<feature type="site" description="Reactive bond 3">
    <location>
        <begin position="18"/>
        <end position="19"/>
    </location>
</feature>
<feature type="glycosylation site" description="N-linked (GlcNAc...) asparagine" evidence="2">
    <location>
        <position position="45"/>
    </location>
</feature>
<feature type="disulfide bond">
    <location>
        <begin position="8"/>
        <end position="38"/>
    </location>
</feature>
<feature type="disulfide bond">
    <location>
        <begin position="16"/>
        <end position="35"/>
    </location>
</feature>
<feature type="disulfide bond">
    <location>
        <begin position="24"/>
        <end position="56"/>
    </location>
</feature>
<feature type="non-terminal residue">
    <location>
        <position position="1"/>
    </location>
</feature>
<feature type="non-terminal residue">
    <location>
        <position position="56"/>
    </location>
</feature>
<accession>P05596</accession>
<protein>
    <recommendedName>
        <fullName>Ovomucoid</fullName>
    </recommendedName>
</protein>
<reference key="1">
    <citation type="journal article" date="1987" name="Biochemistry">
        <title>Ovomucoid third domains from 100 avian species: isolation, sequences, and hypervariability of enzyme-inhibitor contact residues.</title>
        <authorList>
            <person name="Laskowski M. Jr."/>
            <person name="Kato I."/>
            <person name="Ardelt W."/>
            <person name="Cook J."/>
            <person name="Denton A."/>
            <person name="Empie M.W."/>
            <person name="Kohr W.J."/>
            <person name="Park S.J."/>
            <person name="Parks K."/>
            <person name="Schatzley B.L."/>
            <person name="Schoenberger O.L."/>
            <person name="Tashiro M."/>
            <person name="Vichot G."/>
            <person name="Whatley H.E."/>
            <person name="Wieczorek A."/>
            <person name="Wieczorek M."/>
        </authorList>
    </citation>
    <scope>PROTEIN SEQUENCE</scope>
</reference>
<sequence>PAAVSVDCSEYPKPACTMEYRPVCGSDNITYGNKCNFCNAVVKSNGTLTLSHFGKC</sequence>
<name>IOVO_PTEER</name>
<organism>
    <name type="scientific">Pternistis erckelii</name>
    <name type="common">Erckel's francolin</name>
    <name type="synonym">Francolinus erckelii</name>
    <dbReference type="NCBI Taxonomy" id="9022"/>
    <lineage>
        <taxon>Eukaryota</taxon>
        <taxon>Metazoa</taxon>
        <taxon>Chordata</taxon>
        <taxon>Craniata</taxon>
        <taxon>Vertebrata</taxon>
        <taxon>Euteleostomi</taxon>
        <taxon>Archelosauria</taxon>
        <taxon>Archosauria</taxon>
        <taxon>Dinosauria</taxon>
        <taxon>Saurischia</taxon>
        <taxon>Theropoda</taxon>
        <taxon>Coelurosauria</taxon>
        <taxon>Aves</taxon>
        <taxon>Neognathae</taxon>
        <taxon>Galloanserae</taxon>
        <taxon>Galliformes</taxon>
        <taxon>Phasianidae</taxon>
        <taxon>Perdicinae</taxon>
        <taxon>Pternistis</taxon>
    </lineage>
</organism>